<keyword id="KW-0028">Amino-acid biosynthesis</keyword>
<keyword id="KW-0100">Branched-chain amino acid biosynthesis</keyword>
<keyword id="KW-0460">Magnesium</keyword>
<keyword id="KW-0479">Metal-binding</keyword>
<keyword id="KW-0521">NADP</keyword>
<keyword id="KW-0560">Oxidoreductase</keyword>
<evidence type="ECO:0000255" key="1">
    <source>
        <dbReference type="HAMAP-Rule" id="MF_00435"/>
    </source>
</evidence>
<evidence type="ECO:0000255" key="2">
    <source>
        <dbReference type="PROSITE-ProRule" id="PRU01197"/>
    </source>
</evidence>
<evidence type="ECO:0000255" key="3">
    <source>
        <dbReference type="PROSITE-ProRule" id="PRU01198"/>
    </source>
</evidence>
<organism>
    <name type="scientific">Streptococcus pneumoniae (strain Taiwan19F-14)</name>
    <dbReference type="NCBI Taxonomy" id="487213"/>
    <lineage>
        <taxon>Bacteria</taxon>
        <taxon>Bacillati</taxon>
        <taxon>Bacillota</taxon>
        <taxon>Bacilli</taxon>
        <taxon>Lactobacillales</taxon>
        <taxon>Streptococcaceae</taxon>
        <taxon>Streptococcus</taxon>
    </lineage>
</organism>
<proteinExistence type="inferred from homology"/>
<reference key="1">
    <citation type="journal article" date="2010" name="Genome Biol.">
        <title>Structure and dynamics of the pan-genome of Streptococcus pneumoniae and closely related species.</title>
        <authorList>
            <person name="Donati C."/>
            <person name="Hiller N.L."/>
            <person name="Tettelin H."/>
            <person name="Muzzi A."/>
            <person name="Croucher N.J."/>
            <person name="Angiuoli S.V."/>
            <person name="Oggioni M."/>
            <person name="Dunning Hotopp J.C."/>
            <person name="Hu F.Z."/>
            <person name="Riley D.R."/>
            <person name="Covacci A."/>
            <person name="Mitchell T.J."/>
            <person name="Bentley S.D."/>
            <person name="Kilian M."/>
            <person name="Ehrlich G.D."/>
            <person name="Rappuoli R."/>
            <person name="Moxon E.R."/>
            <person name="Masignani V."/>
        </authorList>
    </citation>
    <scope>NUCLEOTIDE SEQUENCE [LARGE SCALE GENOMIC DNA]</scope>
    <source>
        <strain>Taiwan19F-14</strain>
    </source>
</reference>
<comment type="function">
    <text evidence="1">Involved in the biosynthesis of branched-chain amino acids (BCAA). Catalyzes an alkyl-migration followed by a ketol-acid reduction of (S)-2-acetolactate (S2AL) to yield (R)-2,3-dihydroxy-isovalerate. In the isomerase reaction, S2AL is rearranged via a Mg-dependent methyl migration to produce 3-hydroxy-3-methyl-2-ketobutyrate (HMKB). In the reductase reaction, this 2-ketoacid undergoes a metal-dependent reduction by NADPH to yield (R)-2,3-dihydroxy-isovalerate.</text>
</comment>
<comment type="catalytic activity">
    <reaction evidence="1">
        <text>(2R)-2,3-dihydroxy-3-methylbutanoate + NADP(+) = (2S)-2-acetolactate + NADPH + H(+)</text>
        <dbReference type="Rhea" id="RHEA:22068"/>
        <dbReference type="ChEBI" id="CHEBI:15378"/>
        <dbReference type="ChEBI" id="CHEBI:49072"/>
        <dbReference type="ChEBI" id="CHEBI:57783"/>
        <dbReference type="ChEBI" id="CHEBI:58349"/>
        <dbReference type="ChEBI" id="CHEBI:58476"/>
        <dbReference type="EC" id="1.1.1.86"/>
    </reaction>
</comment>
<comment type="catalytic activity">
    <reaction evidence="1">
        <text>(2R,3R)-2,3-dihydroxy-3-methylpentanoate + NADP(+) = (S)-2-ethyl-2-hydroxy-3-oxobutanoate + NADPH + H(+)</text>
        <dbReference type="Rhea" id="RHEA:13493"/>
        <dbReference type="ChEBI" id="CHEBI:15378"/>
        <dbReference type="ChEBI" id="CHEBI:49256"/>
        <dbReference type="ChEBI" id="CHEBI:49258"/>
        <dbReference type="ChEBI" id="CHEBI:57783"/>
        <dbReference type="ChEBI" id="CHEBI:58349"/>
        <dbReference type="EC" id="1.1.1.86"/>
    </reaction>
</comment>
<comment type="cofactor">
    <cofactor evidence="1">
        <name>Mg(2+)</name>
        <dbReference type="ChEBI" id="CHEBI:18420"/>
    </cofactor>
    <text evidence="1">Binds 2 magnesium ions per subunit.</text>
</comment>
<comment type="pathway">
    <text evidence="1">Amino-acid biosynthesis; L-isoleucine biosynthesis; L-isoleucine from 2-oxobutanoate: step 2/4.</text>
</comment>
<comment type="pathway">
    <text evidence="1">Amino-acid biosynthesis; L-valine biosynthesis; L-valine from pyruvate: step 2/4.</text>
</comment>
<comment type="similarity">
    <text evidence="1">Belongs to the ketol-acid reductoisomerase family.</text>
</comment>
<sequence length="340" mass="37350">MTVQMEYEKDVKVAALDGKKIAVIGYGSQGHAHAQNLRDSGRDVIIGVRPGKSFDKAKEDGFDTYTVAEATKLADVIMILAPDEIQQELYEAEIAPNLEAGNAVGFAHGFNIHFEFIKVPADVDVFMCAPKGPGHLVRRTYEEGFGVPALYAVYQDATGNAKNIAMDWCKGVGAARVGLLETTYKEETEEDLFGEQAVLCGGLTALIEAGFEVLTEAGYAPELAYFEVLHEMKLIVDLIYEGGFKKMRQSISNTAEYGDYVSGPRVITEQVKENMKAVLADIQNGKFANDFVNDYKAGRPKLTAYREQAANLEIEKVGAELRKAMPFVGKNDDDAFKIYN</sequence>
<dbReference type="EC" id="1.1.1.86" evidence="1"/>
<dbReference type="EMBL" id="CP000921">
    <property type="protein sequence ID" value="ACO23274.1"/>
    <property type="molecule type" value="Genomic_DNA"/>
</dbReference>
<dbReference type="RefSeq" id="WP_000218054.1">
    <property type="nucleotide sequence ID" value="NC_012469.1"/>
</dbReference>
<dbReference type="SMR" id="C1CPV5"/>
<dbReference type="GeneID" id="45652102"/>
<dbReference type="KEGG" id="snt:SPT_0483"/>
<dbReference type="HOGENOM" id="CLU_033821_0_1_9"/>
<dbReference type="UniPathway" id="UPA00047">
    <property type="reaction ID" value="UER00056"/>
</dbReference>
<dbReference type="UniPathway" id="UPA00049">
    <property type="reaction ID" value="UER00060"/>
</dbReference>
<dbReference type="GO" id="GO:0005829">
    <property type="term" value="C:cytosol"/>
    <property type="evidence" value="ECO:0007669"/>
    <property type="project" value="TreeGrafter"/>
</dbReference>
<dbReference type="GO" id="GO:0004455">
    <property type="term" value="F:ketol-acid reductoisomerase activity"/>
    <property type="evidence" value="ECO:0007669"/>
    <property type="project" value="UniProtKB-UniRule"/>
</dbReference>
<dbReference type="GO" id="GO:0000287">
    <property type="term" value="F:magnesium ion binding"/>
    <property type="evidence" value="ECO:0007669"/>
    <property type="project" value="UniProtKB-UniRule"/>
</dbReference>
<dbReference type="GO" id="GO:0050661">
    <property type="term" value="F:NADP binding"/>
    <property type="evidence" value="ECO:0007669"/>
    <property type="project" value="InterPro"/>
</dbReference>
<dbReference type="GO" id="GO:0009097">
    <property type="term" value="P:isoleucine biosynthetic process"/>
    <property type="evidence" value="ECO:0007669"/>
    <property type="project" value="UniProtKB-UniRule"/>
</dbReference>
<dbReference type="GO" id="GO:0009099">
    <property type="term" value="P:L-valine biosynthetic process"/>
    <property type="evidence" value="ECO:0007669"/>
    <property type="project" value="UniProtKB-UniRule"/>
</dbReference>
<dbReference type="FunFam" id="3.40.50.720:FF:000023">
    <property type="entry name" value="Ketol-acid reductoisomerase (NADP(+))"/>
    <property type="match status" value="1"/>
</dbReference>
<dbReference type="Gene3D" id="6.10.240.10">
    <property type="match status" value="1"/>
</dbReference>
<dbReference type="Gene3D" id="3.40.50.720">
    <property type="entry name" value="NAD(P)-binding Rossmann-like Domain"/>
    <property type="match status" value="1"/>
</dbReference>
<dbReference type="HAMAP" id="MF_00435">
    <property type="entry name" value="IlvC"/>
    <property type="match status" value="1"/>
</dbReference>
<dbReference type="InterPro" id="IPR008927">
    <property type="entry name" value="6-PGluconate_DH-like_C_sf"/>
</dbReference>
<dbReference type="InterPro" id="IPR013023">
    <property type="entry name" value="KARI"/>
</dbReference>
<dbReference type="InterPro" id="IPR000506">
    <property type="entry name" value="KARI_C"/>
</dbReference>
<dbReference type="InterPro" id="IPR013116">
    <property type="entry name" value="KARI_N"/>
</dbReference>
<dbReference type="InterPro" id="IPR014359">
    <property type="entry name" value="KARI_prok"/>
</dbReference>
<dbReference type="InterPro" id="IPR036291">
    <property type="entry name" value="NAD(P)-bd_dom_sf"/>
</dbReference>
<dbReference type="NCBIfam" id="TIGR00465">
    <property type="entry name" value="ilvC"/>
    <property type="match status" value="1"/>
</dbReference>
<dbReference type="NCBIfam" id="NF004017">
    <property type="entry name" value="PRK05479.1"/>
    <property type="match status" value="1"/>
</dbReference>
<dbReference type="NCBIfam" id="NF009940">
    <property type="entry name" value="PRK13403.1"/>
    <property type="match status" value="1"/>
</dbReference>
<dbReference type="PANTHER" id="PTHR21371">
    <property type="entry name" value="KETOL-ACID REDUCTOISOMERASE, MITOCHONDRIAL"/>
    <property type="match status" value="1"/>
</dbReference>
<dbReference type="PANTHER" id="PTHR21371:SF1">
    <property type="entry name" value="KETOL-ACID REDUCTOISOMERASE, MITOCHONDRIAL"/>
    <property type="match status" value="1"/>
</dbReference>
<dbReference type="Pfam" id="PF01450">
    <property type="entry name" value="KARI_C"/>
    <property type="match status" value="1"/>
</dbReference>
<dbReference type="Pfam" id="PF07991">
    <property type="entry name" value="KARI_N"/>
    <property type="match status" value="1"/>
</dbReference>
<dbReference type="PIRSF" id="PIRSF000116">
    <property type="entry name" value="IlvC_gammaproteo"/>
    <property type="match status" value="1"/>
</dbReference>
<dbReference type="SUPFAM" id="SSF48179">
    <property type="entry name" value="6-phosphogluconate dehydrogenase C-terminal domain-like"/>
    <property type="match status" value="1"/>
</dbReference>
<dbReference type="SUPFAM" id="SSF51735">
    <property type="entry name" value="NAD(P)-binding Rossmann-fold domains"/>
    <property type="match status" value="1"/>
</dbReference>
<dbReference type="PROSITE" id="PS51851">
    <property type="entry name" value="KARI_C"/>
    <property type="match status" value="1"/>
</dbReference>
<dbReference type="PROSITE" id="PS51850">
    <property type="entry name" value="KARI_N"/>
    <property type="match status" value="1"/>
</dbReference>
<name>ILVC_STRZT</name>
<accession>C1CPV5</accession>
<feature type="chain" id="PRO_1000191002" description="Ketol-acid reductoisomerase (NADP(+))">
    <location>
        <begin position="1"/>
        <end position="340"/>
    </location>
</feature>
<feature type="domain" description="KARI N-terminal Rossmann" evidence="2">
    <location>
        <begin position="3"/>
        <end position="182"/>
    </location>
</feature>
<feature type="domain" description="KARI C-terminal knotted" evidence="3">
    <location>
        <begin position="183"/>
        <end position="328"/>
    </location>
</feature>
<feature type="active site" evidence="1">
    <location>
        <position position="108"/>
    </location>
</feature>
<feature type="binding site" evidence="1">
    <location>
        <begin position="26"/>
        <end position="29"/>
    </location>
    <ligand>
        <name>NADP(+)</name>
        <dbReference type="ChEBI" id="CHEBI:58349"/>
    </ligand>
</feature>
<feature type="binding site" evidence="1">
    <location>
        <position position="49"/>
    </location>
    <ligand>
        <name>NADP(+)</name>
        <dbReference type="ChEBI" id="CHEBI:58349"/>
    </ligand>
</feature>
<feature type="binding site" evidence="1">
    <location>
        <position position="53"/>
    </location>
    <ligand>
        <name>NADP(+)</name>
        <dbReference type="ChEBI" id="CHEBI:58349"/>
    </ligand>
</feature>
<feature type="binding site" evidence="1">
    <location>
        <begin position="83"/>
        <end position="86"/>
    </location>
    <ligand>
        <name>NADP(+)</name>
        <dbReference type="ChEBI" id="CHEBI:58349"/>
    </ligand>
</feature>
<feature type="binding site" evidence="1">
    <location>
        <position position="134"/>
    </location>
    <ligand>
        <name>NADP(+)</name>
        <dbReference type="ChEBI" id="CHEBI:58349"/>
    </ligand>
</feature>
<feature type="binding site" evidence="1">
    <location>
        <position position="191"/>
    </location>
    <ligand>
        <name>Mg(2+)</name>
        <dbReference type="ChEBI" id="CHEBI:18420"/>
        <label>1</label>
    </ligand>
</feature>
<feature type="binding site" evidence="1">
    <location>
        <position position="191"/>
    </location>
    <ligand>
        <name>Mg(2+)</name>
        <dbReference type="ChEBI" id="CHEBI:18420"/>
        <label>2</label>
    </ligand>
</feature>
<feature type="binding site" evidence="1">
    <location>
        <position position="195"/>
    </location>
    <ligand>
        <name>Mg(2+)</name>
        <dbReference type="ChEBI" id="CHEBI:18420"/>
        <label>1</label>
    </ligand>
</feature>
<feature type="binding site" evidence="1">
    <location>
        <position position="227"/>
    </location>
    <ligand>
        <name>Mg(2+)</name>
        <dbReference type="ChEBI" id="CHEBI:18420"/>
        <label>2</label>
    </ligand>
</feature>
<feature type="binding site" evidence="1">
    <location>
        <position position="231"/>
    </location>
    <ligand>
        <name>Mg(2+)</name>
        <dbReference type="ChEBI" id="CHEBI:18420"/>
        <label>2</label>
    </ligand>
</feature>
<feature type="binding site" evidence="1">
    <location>
        <position position="252"/>
    </location>
    <ligand>
        <name>substrate</name>
    </ligand>
</feature>
<protein>
    <recommendedName>
        <fullName evidence="1">Ketol-acid reductoisomerase (NADP(+))</fullName>
        <shortName evidence="1">KARI</shortName>
        <ecNumber evidence="1">1.1.1.86</ecNumber>
    </recommendedName>
    <alternativeName>
        <fullName evidence="1">Acetohydroxy-acid isomeroreductase</fullName>
        <shortName evidence="1">AHIR</shortName>
    </alternativeName>
    <alternativeName>
        <fullName evidence="1">Alpha-keto-beta-hydroxylacyl reductoisomerase</fullName>
    </alternativeName>
    <alternativeName>
        <fullName evidence="1">Ketol-acid reductoisomerase type 1</fullName>
    </alternativeName>
    <alternativeName>
        <fullName evidence="1">Ketol-acid reductoisomerase type I</fullName>
    </alternativeName>
</protein>
<gene>
    <name evidence="1" type="primary">ilvC</name>
    <name type="ordered locus">SPT_0483</name>
</gene>